<name>RL25_CALS4</name>
<proteinExistence type="inferred from homology"/>
<sequence length="199" mass="22142">MQAITLEAVKRETGKSAARRLKNQGYVPAIMYGKDMTENIPLAVEYTKLQKLLQKYGRNVLLNVVVNGTTHTALIKEIQEDTLKGKIIHVDFQRVSMYEEIEATVPLRFEGIGLIESKGGIVQHQLWELTVESLPDKIPQEIVVDLSHLEIGDTLFVKDIPVPEGVKVLDDPEEIVVSILVPKEAGEEEEEEGEGTAEG</sequence>
<organism>
    <name type="scientific">Caldanaerobacter subterraneus subsp. tengcongensis (strain DSM 15242 / JCM 11007 / NBRC 100824 / MB4)</name>
    <name type="common">Thermoanaerobacter tengcongensis</name>
    <dbReference type="NCBI Taxonomy" id="273068"/>
    <lineage>
        <taxon>Bacteria</taxon>
        <taxon>Bacillati</taxon>
        <taxon>Bacillota</taxon>
        <taxon>Clostridia</taxon>
        <taxon>Thermoanaerobacterales</taxon>
        <taxon>Thermoanaerobacteraceae</taxon>
        <taxon>Caldanaerobacter</taxon>
    </lineage>
</organism>
<feature type="chain" id="PRO_0000181610" description="Large ribosomal subunit protein bL25">
    <location>
        <begin position="1"/>
        <end position="199"/>
    </location>
</feature>
<protein>
    <recommendedName>
        <fullName evidence="1">Large ribosomal subunit protein bL25</fullName>
    </recommendedName>
    <alternativeName>
        <fullName evidence="2">50S ribosomal protein L25</fullName>
    </alternativeName>
    <alternativeName>
        <fullName evidence="1">General stress protein CTC</fullName>
    </alternativeName>
</protein>
<accession>Q8R8L3</accession>
<gene>
    <name evidence="1" type="primary">rplY</name>
    <name evidence="1" type="synonym">ctc</name>
    <name type="ordered locus">TTE1982</name>
</gene>
<evidence type="ECO:0000255" key="1">
    <source>
        <dbReference type="HAMAP-Rule" id="MF_01334"/>
    </source>
</evidence>
<evidence type="ECO:0000305" key="2"/>
<comment type="function">
    <text evidence="1">This is one of the proteins that binds to the 5S RNA in the ribosome where it forms part of the central protuberance.</text>
</comment>
<comment type="subunit">
    <text evidence="1">Part of the 50S ribosomal subunit; part of the 5S rRNA/L5/L18/L25 subcomplex. Contacts the 5S rRNA. Binds to the 5S rRNA independently of L5 and L18.</text>
</comment>
<comment type="similarity">
    <text evidence="1">Belongs to the bacterial ribosomal protein bL25 family. CTC subfamily.</text>
</comment>
<dbReference type="EMBL" id="AE008691">
    <property type="protein sequence ID" value="AAM25161.1"/>
    <property type="molecule type" value="Genomic_DNA"/>
</dbReference>
<dbReference type="RefSeq" id="WP_011026116.1">
    <property type="nucleotide sequence ID" value="NC_003869.1"/>
</dbReference>
<dbReference type="SMR" id="Q8R8L3"/>
<dbReference type="STRING" id="273068.TTE1982"/>
<dbReference type="KEGG" id="tte:TTE1982"/>
<dbReference type="eggNOG" id="COG1825">
    <property type="taxonomic scope" value="Bacteria"/>
</dbReference>
<dbReference type="HOGENOM" id="CLU_075939_2_1_9"/>
<dbReference type="OrthoDB" id="9790002at2"/>
<dbReference type="Proteomes" id="UP000000555">
    <property type="component" value="Chromosome"/>
</dbReference>
<dbReference type="GO" id="GO:0022625">
    <property type="term" value="C:cytosolic large ribosomal subunit"/>
    <property type="evidence" value="ECO:0007669"/>
    <property type="project" value="TreeGrafter"/>
</dbReference>
<dbReference type="GO" id="GO:0008097">
    <property type="term" value="F:5S rRNA binding"/>
    <property type="evidence" value="ECO:0007669"/>
    <property type="project" value="InterPro"/>
</dbReference>
<dbReference type="GO" id="GO:0003735">
    <property type="term" value="F:structural constituent of ribosome"/>
    <property type="evidence" value="ECO:0007669"/>
    <property type="project" value="InterPro"/>
</dbReference>
<dbReference type="GO" id="GO:0006412">
    <property type="term" value="P:translation"/>
    <property type="evidence" value="ECO:0007669"/>
    <property type="project" value="UniProtKB-UniRule"/>
</dbReference>
<dbReference type="CDD" id="cd00495">
    <property type="entry name" value="Ribosomal_L25_TL5_CTC"/>
    <property type="match status" value="1"/>
</dbReference>
<dbReference type="Gene3D" id="2.170.120.20">
    <property type="entry name" value="Ribosomal protein L25, beta domain"/>
    <property type="match status" value="1"/>
</dbReference>
<dbReference type="Gene3D" id="2.40.240.10">
    <property type="entry name" value="Ribosomal Protein L25, Chain P"/>
    <property type="match status" value="1"/>
</dbReference>
<dbReference type="HAMAP" id="MF_01334">
    <property type="entry name" value="Ribosomal_bL25_CTC"/>
    <property type="match status" value="1"/>
</dbReference>
<dbReference type="InterPro" id="IPR020056">
    <property type="entry name" value="Rbsml_bL25/Gln-tRNA_synth_N"/>
</dbReference>
<dbReference type="InterPro" id="IPR011035">
    <property type="entry name" value="Ribosomal_bL25/Gln-tRNA_synth"/>
</dbReference>
<dbReference type="InterPro" id="IPR020057">
    <property type="entry name" value="Ribosomal_bL25_b-dom"/>
</dbReference>
<dbReference type="InterPro" id="IPR037121">
    <property type="entry name" value="Ribosomal_bL25_C"/>
</dbReference>
<dbReference type="InterPro" id="IPR001021">
    <property type="entry name" value="Ribosomal_bL25_long"/>
</dbReference>
<dbReference type="InterPro" id="IPR029751">
    <property type="entry name" value="Ribosomal_L25_dom"/>
</dbReference>
<dbReference type="InterPro" id="IPR020930">
    <property type="entry name" value="Ribosomal_uL5_bac-type"/>
</dbReference>
<dbReference type="NCBIfam" id="TIGR00731">
    <property type="entry name" value="bL25_bact_ctc"/>
    <property type="match status" value="1"/>
</dbReference>
<dbReference type="NCBIfam" id="NF004141">
    <property type="entry name" value="PRK05618.4-4"/>
    <property type="match status" value="1"/>
</dbReference>
<dbReference type="PANTHER" id="PTHR33284">
    <property type="entry name" value="RIBOSOMAL PROTEIN L25/GLN-TRNA SYNTHETASE, ANTI-CODON-BINDING DOMAIN-CONTAINING PROTEIN"/>
    <property type="match status" value="1"/>
</dbReference>
<dbReference type="PANTHER" id="PTHR33284:SF1">
    <property type="entry name" value="RIBOSOMAL PROTEIN L25_GLN-TRNA SYNTHETASE, ANTI-CODON-BINDING DOMAIN-CONTAINING PROTEIN"/>
    <property type="match status" value="1"/>
</dbReference>
<dbReference type="Pfam" id="PF01386">
    <property type="entry name" value="Ribosomal_L25p"/>
    <property type="match status" value="1"/>
</dbReference>
<dbReference type="Pfam" id="PF14693">
    <property type="entry name" value="Ribosomal_TL5_C"/>
    <property type="match status" value="1"/>
</dbReference>
<dbReference type="SUPFAM" id="SSF50715">
    <property type="entry name" value="Ribosomal protein L25-like"/>
    <property type="match status" value="1"/>
</dbReference>
<reference key="1">
    <citation type="journal article" date="2002" name="Genome Res.">
        <title>A complete sequence of the T. tengcongensis genome.</title>
        <authorList>
            <person name="Bao Q."/>
            <person name="Tian Y."/>
            <person name="Li W."/>
            <person name="Xu Z."/>
            <person name="Xuan Z."/>
            <person name="Hu S."/>
            <person name="Dong W."/>
            <person name="Yang J."/>
            <person name="Chen Y."/>
            <person name="Xue Y."/>
            <person name="Xu Y."/>
            <person name="Lai X."/>
            <person name="Huang L."/>
            <person name="Dong X."/>
            <person name="Ma Y."/>
            <person name="Ling L."/>
            <person name="Tan H."/>
            <person name="Chen R."/>
            <person name="Wang J."/>
            <person name="Yu J."/>
            <person name="Yang H."/>
        </authorList>
    </citation>
    <scope>NUCLEOTIDE SEQUENCE [LARGE SCALE GENOMIC DNA]</scope>
    <source>
        <strain>DSM 15242 / JCM 11007 / NBRC 100824 / MB4</strain>
    </source>
</reference>
<keyword id="KW-1185">Reference proteome</keyword>
<keyword id="KW-0687">Ribonucleoprotein</keyword>
<keyword id="KW-0689">Ribosomal protein</keyword>
<keyword id="KW-0694">RNA-binding</keyword>
<keyword id="KW-0699">rRNA-binding</keyword>